<reference key="1">
    <citation type="journal article" date="2001" name="DNA Res.">
        <title>Complete genomic sequence of the filamentous nitrogen-fixing cyanobacterium Anabaena sp. strain PCC 7120.</title>
        <authorList>
            <person name="Kaneko T."/>
            <person name="Nakamura Y."/>
            <person name="Wolk C.P."/>
            <person name="Kuritz T."/>
            <person name="Sasamoto S."/>
            <person name="Watanabe A."/>
            <person name="Iriguchi M."/>
            <person name="Ishikawa A."/>
            <person name="Kawashima K."/>
            <person name="Kimura T."/>
            <person name="Kishida Y."/>
            <person name="Kohara M."/>
            <person name="Matsumoto M."/>
            <person name="Matsuno A."/>
            <person name="Muraki A."/>
            <person name="Nakazaki N."/>
            <person name="Shimpo S."/>
            <person name="Sugimoto M."/>
            <person name="Takazawa M."/>
            <person name="Yamada M."/>
            <person name="Yasuda M."/>
            <person name="Tabata S."/>
        </authorList>
    </citation>
    <scope>NUCLEOTIDE SEQUENCE [LARGE SCALE GENOMIC DNA]</scope>
    <source>
        <strain>PCC 7120 / SAG 25.82 / UTEX 2576</strain>
    </source>
</reference>
<keyword id="KW-0169">Cobalamin biosynthesis</keyword>
<keyword id="KW-0315">Glutamine amidotransferase</keyword>
<keyword id="KW-1185">Reference proteome</keyword>
<organism>
    <name type="scientific">Nostoc sp. (strain PCC 7120 / SAG 25.82 / UTEX 2576)</name>
    <dbReference type="NCBI Taxonomy" id="103690"/>
    <lineage>
        <taxon>Bacteria</taxon>
        <taxon>Bacillati</taxon>
        <taxon>Cyanobacteriota</taxon>
        <taxon>Cyanophyceae</taxon>
        <taxon>Nostocales</taxon>
        <taxon>Nostocaceae</taxon>
        <taxon>Nostoc</taxon>
    </lineage>
</organism>
<accession>Q8YUG9</accession>
<name>COBQ_NOSS1</name>
<protein>
    <recommendedName>
        <fullName evidence="1">Cobyric acid synthase</fullName>
    </recommendedName>
</protein>
<comment type="function">
    <text evidence="1">Catalyzes amidations at positions B, D, E, and G on adenosylcobyrinic A,C-diamide. NH(2) groups are provided by glutamine, and one molecule of ATP is hydrogenolyzed for each amidation.</text>
</comment>
<comment type="pathway">
    <text evidence="1">Cofactor biosynthesis; adenosylcobalamin biosynthesis.</text>
</comment>
<comment type="similarity">
    <text evidence="1">Belongs to the CobB/CobQ family. CobQ subfamily.</text>
</comment>
<feature type="chain" id="PRO_0000141286" description="Cobyric acid synthase">
    <location>
        <begin position="1"/>
        <end position="493"/>
    </location>
</feature>
<feature type="domain" description="GATase cobBQ-type" evidence="1">
    <location>
        <begin position="252"/>
        <end position="443"/>
    </location>
</feature>
<feature type="active site" description="Nucleophile" evidence="1">
    <location>
        <position position="333"/>
    </location>
</feature>
<feature type="active site" evidence="1">
    <location>
        <position position="435"/>
    </location>
</feature>
<gene>
    <name evidence="1" type="primary">cobQ</name>
    <name type="ordered locus">alr2377</name>
</gene>
<sequence length="493" mass="54363">MAMKSIMVVGTTSHAGKSLISTAICRILSRRGWRVAPFKGQNMALNAYVTANGGEIGYAQAVQAWAAGVVPWVEMNPILLKPQGDMTSQVIIRGRPVGRVNAADYYEQYFEPGWRAIEESLQHLATEFDLVVCEGAGSPAEINLKHRDLTNMRVAKYLNAPTLLVVDIDRGGAFAHVVGTLELLDPEERQLIKGVVINKFRGQRSLLDPGIKWLEERTGIPVVGVIPYLQEVFPAEDSLDLLERKTHKAHADLQITVVRLPRIANFTDFDPLESEPTVAVKYISPKQDLGHPDAVILPGTKTTIADLILLQKTGMAEAIQNYAASGGTVLGICGGYQILGQMIADPEGIEGQAGRYQGLNLLPIRTVITGQKIARQRQVSSNFPQQGLPVNGFEIHQGRSRVEPQGDSQAFQPLFDDVNLGLVDSCQSVWGSYLHGLFDNGPWRRAWLNRLRQQRGLKSLPTGVANYREQREQMLDNIATEVENHLDLTPFLP</sequence>
<dbReference type="EMBL" id="BA000019">
    <property type="protein sequence ID" value="BAB74076.1"/>
    <property type="molecule type" value="Genomic_DNA"/>
</dbReference>
<dbReference type="PIR" id="AB2103">
    <property type="entry name" value="AB2103"/>
</dbReference>
<dbReference type="SMR" id="Q8YUG9"/>
<dbReference type="STRING" id="103690.gene:10494407"/>
<dbReference type="KEGG" id="ana:alr2377"/>
<dbReference type="eggNOG" id="COG1492">
    <property type="taxonomic scope" value="Bacteria"/>
</dbReference>
<dbReference type="UniPathway" id="UPA00148"/>
<dbReference type="Proteomes" id="UP000002483">
    <property type="component" value="Chromosome"/>
</dbReference>
<dbReference type="GO" id="GO:0015420">
    <property type="term" value="F:ABC-type vitamin B12 transporter activity"/>
    <property type="evidence" value="ECO:0007669"/>
    <property type="project" value="UniProtKB-UniRule"/>
</dbReference>
<dbReference type="GO" id="GO:0003824">
    <property type="term" value="F:catalytic activity"/>
    <property type="evidence" value="ECO:0007669"/>
    <property type="project" value="InterPro"/>
</dbReference>
<dbReference type="GO" id="GO:0009236">
    <property type="term" value="P:cobalamin biosynthetic process"/>
    <property type="evidence" value="ECO:0007669"/>
    <property type="project" value="UniProtKB-UniRule"/>
</dbReference>
<dbReference type="CDD" id="cd05389">
    <property type="entry name" value="CobQ_N"/>
    <property type="match status" value="1"/>
</dbReference>
<dbReference type="CDD" id="cd01750">
    <property type="entry name" value="GATase1_CobQ"/>
    <property type="match status" value="1"/>
</dbReference>
<dbReference type="Gene3D" id="3.40.50.880">
    <property type="match status" value="1"/>
</dbReference>
<dbReference type="Gene3D" id="3.40.50.300">
    <property type="entry name" value="P-loop containing nucleotide triphosphate hydrolases"/>
    <property type="match status" value="1"/>
</dbReference>
<dbReference type="HAMAP" id="MF_00028">
    <property type="entry name" value="CobQ"/>
    <property type="match status" value="1"/>
</dbReference>
<dbReference type="InterPro" id="IPR029062">
    <property type="entry name" value="Class_I_gatase-like"/>
</dbReference>
<dbReference type="InterPro" id="IPR002586">
    <property type="entry name" value="CobQ/CobB/MinD/ParA_Nub-bd_dom"/>
</dbReference>
<dbReference type="InterPro" id="IPR033949">
    <property type="entry name" value="CobQ_GATase1"/>
</dbReference>
<dbReference type="InterPro" id="IPR047045">
    <property type="entry name" value="CobQ_N"/>
</dbReference>
<dbReference type="InterPro" id="IPR004459">
    <property type="entry name" value="CobQ_synth"/>
</dbReference>
<dbReference type="InterPro" id="IPR011698">
    <property type="entry name" value="GATase_3"/>
</dbReference>
<dbReference type="InterPro" id="IPR027417">
    <property type="entry name" value="P-loop_NTPase"/>
</dbReference>
<dbReference type="NCBIfam" id="TIGR00313">
    <property type="entry name" value="cobQ"/>
    <property type="match status" value="1"/>
</dbReference>
<dbReference type="NCBIfam" id="NF001989">
    <property type="entry name" value="PRK00784.1"/>
    <property type="match status" value="1"/>
</dbReference>
<dbReference type="PANTHER" id="PTHR21343:SF1">
    <property type="entry name" value="COBYRIC ACID SYNTHASE"/>
    <property type="match status" value="1"/>
</dbReference>
<dbReference type="PANTHER" id="PTHR21343">
    <property type="entry name" value="DETHIOBIOTIN SYNTHETASE"/>
    <property type="match status" value="1"/>
</dbReference>
<dbReference type="Pfam" id="PF01656">
    <property type="entry name" value="CbiA"/>
    <property type="match status" value="1"/>
</dbReference>
<dbReference type="Pfam" id="PF07685">
    <property type="entry name" value="GATase_3"/>
    <property type="match status" value="1"/>
</dbReference>
<dbReference type="SUPFAM" id="SSF52317">
    <property type="entry name" value="Class I glutamine amidotransferase-like"/>
    <property type="match status" value="1"/>
</dbReference>
<dbReference type="SUPFAM" id="SSF52540">
    <property type="entry name" value="P-loop containing nucleoside triphosphate hydrolases"/>
    <property type="match status" value="1"/>
</dbReference>
<dbReference type="PROSITE" id="PS51274">
    <property type="entry name" value="GATASE_COBBQ"/>
    <property type="match status" value="1"/>
</dbReference>
<evidence type="ECO:0000255" key="1">
    <source>
        <dbReference type="HAMAP-Rule" id="MF_00028"/>
    </source>
</evidence>
<proteinExistence type="inferred from homology"/>